<dbReference type="EMBL" id="CP001020">
    <property type="protein sequence ID" value="ACJ19719.1"/>
    <property type="molecule type" value="Genomic_DNA"/>
</dbReference>
<dbReference type="RefSeq" id="WP_012570653.1">
    <property type="nucleotide sequence ID" value="NC_011528.1"/>
</dbReference>
<dbReference type="SMR" id="B6J5D5"/>
<dbReference type="KEGG" id="cbc:CbuK_0436"/>
<dbReference type="HOGENOM" id="CLU_036235_2_1_6"/>
<dbReference type="GO" id="GO:0015934">
    <property type="term" value="C:large ribosomal subunit"/>
    <property type="evidence" value="ECO:0007669"/>
    <property type="project" value="InterPro"/>
</dbReference>
<dbReference type="GO" id="GO:0019843">
    <property type="term" value="F:rRNA binding"/>
    <property type="evidence" value="ECO:0007669"/>
    <property type="project" value="UniProtKB-UniRule"/>
</dbReference>
<dbReference type="GO" id="GO:0003735">
    <property type="term" value="F:structural constituent of ribosome"/>
    <property type="evidence" value="ECO:0007669"/>
    <property type="project" value="InterPro"/>
</dbReference>
<dbReference type="GO" id="GO:0016740">
    <property type="term" value="F:transferase activity"/>
    <property type="evidence" value="ECO:0007669"/>
    <property type="project" value="InterPro"/>
</dbReference>
<dbReference type="GO" id="GO:0002181">
    <property type="term" value="P:cytoplasmic translation"/>
    <property type="evidence" value="ECO:0007669"/>
    <property type="project" value="TreeGrafter"/>
</dbReference>
<dbReference type="FunFam" id="2.30.30.30:FF:000001">
    <property type="entry name" value="50S ribosomal protein L2"/>
    <property type="match status" value="1"/>
</dbReference>
<dbReference type="FunFam" id="2.40.50.140:FF:000003">
    <property type="entry name" value="50S ribosomal protein L2"/>
    <property type="match status" value="1"/>
</dbReference>
<dbReference type="FunFam" id="4.10.950.10:FF:000001">
    <property type="entry name" value="50S ribosomal protein L2"/>
    <property type="match status" value="1"/>
</dbReference>
<dbReference type="Gene3D" id="2.30.30.30">
    <property type="match status" value="1"/>
</dbReference>
<dbReference type="Gene3D" id="2.40.50.140">
    <property type="entry name" value="Nucleic acid-binding proteins"/>
    <property type="match status" value="1"/>
</dbReference>
<dbReference type="Gene3D" id="4.10.950.10">
    <property type="entry name" value="Ribosomal protein L2, domain 3"/>
    <property type="match status" value="1"/>
</dbReference>
<dbReference type="HAMAP" id="MF_01320_B">
    <property type="entry name" value="Ribosomal_uL2_B"/>
    <property type="match status" value="1"/>
</dbReference>
<dbReference type="InterPro" id="IPR012340">
    <property type="entry name" value="NA-bd_OB-fold"/>
</dbReference>
<dbReference type="InterPro" id="IPR014722">
    <property type="entry name" value="Rib_uL2_dom2"/>
</dbReference>
<dbReference type="InterPro" id="IPR002171">
    <property type="entry name" value="Ribosomal_uL2"/>
</dbReference>
<dbReference type="InterPro" id="IPR005880">
    <property type="entry name" value="Ribosomal_uL2_bac/org-type"/>
</dbReference>
<dbReference type="InterPro" id="IPR022669">
    <property type="entry name" value="Ribosomal_uL2_C"/>
</dbReference>
<dbReference type="InterPro" id="IPR022671">
    <property type="entry name" value="Ribosomal_uL2_CS"/>
</dbReference>
<dbReference type="InterPro" id="IPR014726">
    <property type="entry name" value="Ribosomal_uL2_dom3"/>
</dbReference>
<dbReference type="InterPro" id="IPR022666">
    <property type="entry name" value="Ribosomal_uL2_RNA-bd_dom"/>
</dbReference>
<dbReference type="InterPro" id="IPR008991">
    <property type="entry name" value="Translation_prot_SH3-like_sf"/>
</dbReference>
<dbReference type="NCBIfam" id="TIGR01171">
    <property type="entry name" value="rplB_bact"/>
    <property type="match status" value="1"/>
</dbReference>
<dbReference type="PANTHER" id="PTHR13691:SF5">
    <property type="entry name" value="LARGE RIBOSOMAL SUBUNIT PROTEIN UL2M"/>
    <property type="match status" value="1"/>
</dbReference>
<dbReference type="PANTHER" id="PTHR13691">
    <property type="entry name" value="RIBOSOMAL PROTEIN L2"/>
    <property type="match status" value="1"/>
</dbReference>
<dbReference type="Pfam" id="PF00181">
    <property type="entry name" value="Ribosomal_L2"/>
    <property type="match status" value="1"/>
</dbReference>
<dbReference type="Pfam" id="PF03947">
    <property type="entry name" value="Ribosomal_L2_C"/>
    <property type="match status" value="1"/>
</dbReference>
<dbReference type="PIRSF" id="PIRSF002158">
    <property type="entry name" value="Ribosomal_L2"/>
    <property type="match status" value="1"/>
</dbReference>
<dbReference type="SMART" id="SM01383">
    <property type="entry name" value="Ribosomal_L2"/>
    <property type="match status" value="1"/>
</dbReference>
<dbReference type="SMART" id="SM01382">
    <property type="entry name" value="Ribosomal_L2_C"/>
    <property type="match status" value="1"/>
</dbReference>
<dbReference type="SUPFAM" id="SSF50249">
    <property type="entry name" value="Nucleic acid-binding proteins"/>
    <property type="match status" value="1"/>
</dbReference>
<dbReference type="SUPFAM" id="SSF50104">
    <property type="entry name" value="Translation proteins SH3-like domain"/>
    <property type="match status" value="1"/>
</dbReference>
<dbReference type="PROSITE" id="PS00467">
    <property type="entry name" value="RIBOSOMAL_L2"/>
    <property type="match status" value="1"/>
</dbReference>
<sequence length="275" mass="30410">MALVKTKPTSPGRRFVVKVVHPELHKGDPYAPLVESKNRINSRNNQGRITLRRRGGGHKRNYRIIDFKRDKEGIEGKVERLEYDPNRSAHIALVLYPDGERRYIIAPIGVHKGSKVVSGREAPIRPGNCLPLQNIPLGATIHNIELKPGKGAQLVRSAGASAQLAAKEGIYAIIRMRSGETRKILAVCRACIGEVSNSEHNLRSLGKAGAKRWRGRRPTVRGVAMNPVDHPHGGGEGKTSGGRHPVSPTGKPTKGYKTRRNKRTSNMIIRDRRKK</sequence>
<feature type="chain" id="PRO_1000165737" description="Large ribosomal subunit protein uL2">
    <location>
        <begin position="1"/>
        <end position="275"/>
    </location>
</feature>
<feature type="region of interest" description="Disordered" evidence="2">
    <location>
        <begin position="208"/>
        <end position="275"/>
    </location>
</feature>
<feature type="compositionally biased region" description="Basic residues" evidence="2">
    <location>
        <begin position="209"/>
        <end position="219"/>
    </location>
</feature>
<feature type="compositionally biased region" description="Basic residues" evidence="2">
    <location>
        <begin position="254"/>
        <end position="263"/>
    </location>
</feature>
<gene>
    <name evidence="1" type="primary">rplB</name>
    <name type="ordered locus">CbuK_0436</name>
</gene>
<reference key="1">
    <citation type="journal article" date="2009" name="Infect. Immun.">
        <title>Comparative genomics reveal extensive transposon-mediated genomic plasticity and diversity among potential effector proteins within the genus Coxiella.</title>
        <authorList>
            <person name="Beare P.A."/>
            <person name="Unsworth N."/>
            <person name="Andoh M."/>
            <person name="Voth D.E."/>
            <person name="Omsland A."/>
            <person name="Gilk S.D."/>
            <person name="Williams K.P."/>
            <person name="Sobral B.W."/>
            <person name="Kupko J.J. III"/>
            <person name="Porcella S.F."/>
            <person name="Samuel J.E."/>
            <person name="Heinzen R.A."/>
        </authorList>
    </citation>
    <scope>NUCLEOTIDE SEQUENCE [LARGE SCALE GENOMIC DNA]</scope>
    <source>
        <strain>CbuK_Q154</strain>
    </source>
</reference>
<evidence type="ECO:0000255" key="1">
    <source>
        <dbReference type="HAMAP-Rule" id="MF_01320"/>
    </source>
</evidence>
<evidence type="ECO:0000256" key="2">
    <source>
        <dbReference type="SAM" id="MobiDB-lite"/>
    </source>
</evidence>
<evidence type="ECO:0000305" key="3"/>
<proteinExistence type="inferred from homology"/>
<comment type="function">
    <text evidence="1">One of the primary rRNA binding proteins. Required for association of the 30S and 50S subunits to form the 70S ribosome, for tRNA binding and peptide bond formation. It has been suggested to have peptidyltransferase activity; this is somewhat controversial. Makes several contacts with the 16S rRNA in the 70S ribosome.</text>
</comment>
<comment type="subunit">
    <text evidence="1">Part of the 50S ribosomal subunit. Forms a bridge to the 30S subunit in the 70S ribosome.</text>
</comment>
<comment type="similarity">
    <text evidence="1">Belongs to the universal ribosomal protein uL2 family.</text>
</comment>
<name>RL2_COXB1</name>
<accession>B6J5D5</accession>
<keyword id="KW-0687">Ribonucleoprotein</keyword>
<keyword id="KW-0689">Ribosomal protein</keyword>
<keyword id="KW-0694">RNA-binding</keyword>
<keyword id="KW-0699">rRNA-binding</keyword>
<organism>
    <name type="scientific">Coxiella burnetii (strain CbuK_Q154)</name>
    <name type="common">Coxiella burnetii (strain Q154)</name>
    <dbReference type="NCBI Taxonomy" id="434924"/>
    <lineage>
        <taxon>Bacteria</taxon>
        <taxon>Pseudomonadati</taxon>
        <taxon>Pseudomonadota</taxon>
        <taxon>Gammaproteobacteria</taxon>
        <taxon>Legionellales</taxon>
        <taxon>Coxiellaceae</taxon>
        <taxon>Coxiella</taxon>
    </lineage>
</organism>
<protein>
    <recommendedName>
        <fullName evidence="1">Large ribosomal subunit protein uL2</fullName>
    </recommendedName>
    <alternativeName>
        <fullName evidence="3">50S ribosomal protein L2</fullName>
    </alternativeName>
</protein>